<gene>
    <name type="primary">ZNF574</name>
    <name type="ORF">QtsA-11557</name>
</gene>
<organism>
    <name type="scientific">Macaca fascicularis</name>
    <name type="common">Crab-eating macaque</name>
    <name type="synonym">Cynomolgus monkey</name>
    <dbReference type="NCBI Taxonomy" id="9541"/>
    <lineage>
        <taxon>Eukaryota</taxon>
        <taxon>Metazoa</taxon>
        <taxon>Chordata</taxon>
        <taxon>Craniata</taxon>
        <taxon>Vertebrata</taxon>
        <taxon>Euteleostomi</taxon>
        <taxon>Mammalia</taxon>
        <taxon>Eutheria</taxon>
        <taxon>Euarchontoglires</taxon>
        <taxon>Primates</taxon>
        <taxon>Haplorrhini</taxon>
        <taxon>Catarrhini</taxon>
        <taxon>Cercopithecidae</taxon>
        <taxon>Cercopithecinae</taxon>
        <taxon>Macaca</taxon>
    </lineage>
</organism>
<feature type="chain" id="PRO_0000274862" description="Zinc finger protein 574">
    <location>
        <begin position="1"/>
        <end position="896"/>
    </location>
</feature>
<feature type="zinc finger region" description="C2H2-type 1" evidence="2">
    <location>
        <begin position="16"/>
        <end position="38"/>
    </location>
</feature>
<feature type="zinc finger region" description="C2H2-type 2" evidence="2">
    <location>
        <begin position="76"/>
        <end position="98"/>
    </location>
</feature>
<feature type="zinc finger region" description="C2H2-type 3" evidence="2">
    <location>
        <begin position="126"/>
        <end position="148"/>
    </location>
</feature>
<feature type="zinc finger region" description="C2H2-type 4" evidence="2">
    <location>
        <begin position="214"/>
        <end position="236"/>
    </location>
</feature>
<feature type="zinc finger region" description="C2H2-type 5" evidence="2">
    <location>
        <begin position="309"/>
        <end position="331"/>
    </location>
</feature>
<feature type="zinc finger region" description="C2H2-type 6" evidence="2">
    <location>
        <begin position="336"/>
        <end position="358"/>
    </location>
</feature>
<feature type="zinc finger region" description="C2H2-type 7" evidence="2">
    <location>
        <begin position="364"/>
        <end position="386"/>
    </location>
</feature>
<feature type="zinc finger region" description="C2H2-type 8" evidence="2">
    <location>
        <begin position="392"/>
        <end position="413"/>
    </location>
</feature>
<feature type="zinc finger region" description="C2H2-type 9" evidence="2">
    <location>
        <begin position="466"/>
        <end position="489"/>
    </location>
</feature>
<feature type="zinc finger region" description="C2H2-type 10" evidence="2">
    <location>
        <begin position="495"/>
        <end position="517"/>
    </location>
</feature>
<feature type="zinc finger region" description="C2H2-type 11" evidence="2">
    <location>
        <begin position="523"/>
        <end position="545"/>
    </location>
</feature>
<feature type="zinc finger region" description="C2H2-type 12" evidence="2">
    <location>
        <begin position="551"/>
        <end position="573"/>
    </location>
</feature>
<feature type="zinc finger region" description="C2H2-type 13" evidence="2">
    <location>
        <begin position="579"/>
        <end position="601"/>
    </location>
</feature>
<feature type="zinc finger region" description="C2H2-type 14" evidence="2">
    <location>
        <begin position="607"/>
        <end position="630"/>
    </location>
</feature>
<feature type="zinc finger region" description="C2H2-type 15; degenerate" evidence="2">
    <location>
        <begin position="636"/>
        <end position="659"/>
    </location>
</feature>
<feature type="zinc finger region" description="C2H2-type 16" evidence="2">
    <location>
        <begin position="667"/>
        <end position="689"/>
    </location>
</feature>
<feature type="zinc finger region" description="C2H2-type 17" evidence="2">
    <location>
        <begin position="738"/>
        <end position="760"/>
    </location>
</feature>
<feature type="zinc finger region" description="C2H2-type 18" evidence="2">
    <location>
        <begin position="766"/>
        <end position="788"/>
    </location>
</feature>
<feature type="zinc finger region" description="C2H2-type 19" evidence="2">
    <location>
        <begin position="794"/>
        <end position="816"/>
    </location>
</feature>
<feature type="zinc finger region" description="C2H2-type 20" evidence="2">
    <location>
        <begin position="822"/>
        <end position="844"/>
    </location>
</feature>
<feature type="region of interest" description="Disordered" evidence="3">
    <location>
        <begin position="239"/>
        <end position="301"/>
    </location>
</feature>
<feature type="region of interest" description="Disordered" evidence="3">
    <location>
        <begin position="434"/>
        <end position="460"/>
    </location>
</feature>
<feature type="region of interest" description="Disordered" evidence="3">
    <location>
        <begin position="687"/>
        <end position="733"/>
    </location>
</feature>
<feature type="compositionally biased region" description="Polar residues" evidence="3">
    <location>
        <begin position="247"/>
        <end position="257"/>
    </location>
</feature>
<feature type="compositionally biased region" description="Basic and acidic residues" evidence="3">
    <location>
        <begin position="274"/>
        <end position="287"/>
    </location>
</feature>
<feature type="compositionally biased region" description="Low complexity" evidence="3">
    <location>
        <begin position="707"/>
        <end position="732"/>
    </location>
</feature>
<feature type="modified residue" description="Phosphoserine" evidence="1">
    <location>
        <position position="164"/>
    </location>
</feature>
<feature type="modified residue" description="Phosphoserine" evidence="1">
    <location>
        <position position="298"/>
    </location>
</feature>
<feature type="modified residue" description="Phosphoserine" evidence="1">
    <location>
        <position position="717"/>
    </location>
</feature>
<feature type="modified residue" description="Phosphothreonine" evidence="1">
    <location>
        <position position="724"/>
    </location>
</feature>
<feature type="modified residue" description="Phosphoserine" evidence="1">
    <location>
        <position position="728"/>
    </location>
</feature>
<feature type="modified residue" description="Asymmetric dimethylarginine" evidence="1">
    <location>
        <position position="832"/>
    </location>
</feature>
<comment type="function">
    <text>May be involved in transcriptional regulation.</text>
</comment>
<comment type="subcellular location">
    <subcellularLocation>
        <location evidence="4">Nucleus</location>
    </subcellularLocation>
</comment>
<comment type="similarity">
    <text evidence="4">Belongs to the krueppel C2H2-type zinc-finger protein family.</text>
</comment>
<comment type="sequence caution" evidence="4">
    <conflict type="erroneous initiation">
        <sequence resource="EMBL-CDS" id="BAE00493"/>
    </conflict>
</comment>
<accession>Q4R8S8</accession>
<protein>
    <recommendedName>
        <fullName>Zinc finger protein 574</fullName>
    </recommendedName>
</protein>
<reference key="1">
    <citation type="submission" date="2005-06" db="EMBL/GenBank/DDBJ databases">
        <title>DNA sequences of macaque genes expressed in brain or testis and its evolutionary implications.</title>
        <authorList>
            <consortium name="International consortium for macaque cDNA sequencing and analysis"/>
        </authorList>
    </citation>
    <scope>NUCLEOTIDE SEQUENCE [LARGE SCALE MRNA] OF 9-896</scope>
    <source>
        <tissue>Testis</tissue>
    </source>
</reference>
<keyword id="KW-0238">DNA-binding</keyword>
<keyword id="KW-0479">Metal-binding</keyword>
<keyword id="KW-0488">Methylation</keyword>
<keyword id="KW-0539">Nucleus</keyword>
<keyword id="KW-0597">Phosphoprotein</keyword>
<keyword id="KW-1185">Reference proteome</keyword>
<keyword id="KW-0677">Repeat</keyword>
<keyword id="KW-0804">Transcription</keyword>
<keyword id="KW-0805">Transcription regulation</keyword>
<keyword id="KW-0862">Zinc</keyword>
<keyword id="KW-0863">Zinc-finger</keyword>
<sequence length="896" mass="98866">MTEESEETVLYIEHRYVCSECNQLYGSLEEVLMHQNSHVPQQHFELVGVADPGVTVATDTASGTGLYQTLVQESQYQCLECGQLLMSPSQLLEHQELHLKMMTPQEAVPAEPPPKAPPLSSSTIHYECVDCKALFASQELWLNHRQTHLRATPTKAPAPVVLGSPVVPGPPVGQARVAVEHSYRKAEEGGEGATVPSAAATTTEVVTEVELLLYKCSECSQLFQLPADFLEHQATHFPAPVPESQEPALQQEVQASSPAEVPVSQPDPVPASDHSYELRNGEAIGRDRRGRRARRNNSGEAGGAATQELFCSACDQLFLSPHQLQQHLRSHREGVFKCPLCSRVFPSPSSLDQHLGDHSSESHFLCVDCGLAFGTEALLLAHRRAHTPNPLHSCPCGKTFVNLTKFLYHRRTHGVGGVPLPTTPVPPEEPVIGFPEPAPAETGEPEAPEPPVSEETSAGPAAPGTYRCLLCSREFGKALQLTRHQRFVHRLERRHKCSICGKMFKKKSHVRNHLRTHTGERPFPCPDCSKPFNSPANLARHRLTHTGERPYRCGDCGKAFTQSSTLRQHRLVHAQHFPYRCQECGVRFHRPYRLLMHRYHHTGEYPYKCRECPRSFLLRRLLEVHQLVVHAGRQPHRCPSCGAAFPSSLRLREHRCAAAAAQAPRRFECGTCGKKVGSAARLQAHEAAHAAAGPGEVLAKEPPAPRAPRATRAPVASPAGLGGTATASPAAPARRRGLECSECKKLFSTETSLQVHRRIHTGERPYPCPDCGKAFRQSTHLKDHRRLHTGERPFACEVCGKAFAISMRLAEHRRIHTGERPYSCPDCGKSYRSFSNLWKHRKTHQQQHQAAVRQQLAEAEAAVGLAVMETAVEALPLVEAIEIYPLAEAEGVQISG</sequence>
<proteinExistence type="evidence at transcript level"/>
<evidence type="ECO:0000250" key="1">
    <source>
        <dbReference type="UniProtKB" id="Q6ZN55"/>
    </source>
</evidence>
<evidence type="ECO:0000255" key="2">
    <source>
        <dbReference type="PROSITE-ProRule" id="PRU00042"/>
    </source>
</evidence>
<evidence type="ECO:0000256" key="3">
    <source>
        <dbReference type="SAM" id="MobiDB-lite"/>
    </source>
</evidence>
<evidence type="ECO:0000305" key="4"/>
<name>ZN574_MACFA</name>
<dbReference type="EMBL" id="AB168370">
    <property type="protein sequence ID" value="BAE00493.1"/>
    <property type="status" value="ALT_INIT"/>
    <property type="molecule type" value="mRNA"/>
</dbReference>
<dbReference type="RefSeq" id="NP_001270061.1">
    <property type="nucleotide sequence ID" value="NM_001283132.1"/>
</dbReference>
<dbReference type="SMR" id="Q4R8S8"/>
<dbReference type="STRING" id="9541.ENSMFAP00000032684"/>
<dbReference type="eggNOG" id="KOG1721">
    <property type="taxonomic scope" value="Eukaryota"/>
</dbReference>
<dbReference type="Proteomes" id="UP000233100">
    <property type="component" value="Unplaced"/>
</dbReference>
<dbReference type="GO" id="GO:0005654">
    <property type="term" value="C:nucleoplasm"/>
    <property type="evidence" value="ECO:0007669"/>
    <property type="project" value="TreeGrafter"/>
</dbReference>
<dbReference type="GO" id="GO:0001227">
    <property type="term" value="F:DNA-binding transcription repressor activity, RNA polymerase II-specific"/>
    <property type="evidence" value="ECO:0007669"/>
    <property type="project" value="TreeGrafter"/>
</dbReference>
<dbReference type="GO" id="GO:0000978">
    <property type="term" value="F:RNA polymerase II cis-regulatory region sequence-specific DNA binding"/>
    <property type="evidence" value="ECO:0007669"/>
    <property type="project" value="TreeGrafter"/>
</dbReference>
<dbReference type="GO" id="GO:0008270">
    <property type="term" value="F:zinc ion binding"/>
    <property type="evidence" value="ECO:0007669"/>
    <property type="project" value="UniProtKB-KW"/>
</dbReference>
<dbReference type="GO" id="GO:0001817">
    <property type="term" value="P:regulation of cytokine production"/>
    <property type="evidence" value="ECO:0007669"/>
    <property type="project" value="TreeGrafter"/>
</dbReference>
<dbReference type="GO" id="GO:0002682">
    <property type="term" value="P:regulation of immune system process"/>
    <property type="evidence" value="ECO:0007669"/>
    <property type="project" value="TreeGrafter"/>
</dbReference>
<dbReference type="FunFam" id="3.30.160.60:FF:000145">
    <property type="entry name" value="Zinc finger protein 574"/>
    <property type="match status" value="1"/>
</dbReference>
<dbReference type="FunFam" id="3.30.160.60:FF:000202">
    <property type="entry name" value="Zinc finger protein 574"/>
    <property type="match status" value="1"/>
</dbReference>
<dbReference type="FunFam" id="3.30.160.60:FF:000788">
    <property type="entry name" value="Zinc finger protein 574"/>
    <property type="match status" value="1"/>
</dbReference>
<dbReference type="FunFam" id="3.30.160.60:FF:001231">
    <property type="entry name" value="Zinc finger protein 574"/>
    <property type="match status" value="1"/>
</dbReference>
<dbReference type="FunFam" id="3.30.160.60:FF:000381">
    <property type="entry name" value="zinc finger protein 574"/>
    <property type="match status" value="3"/>
</dbReference>
<dbReference type="FunFam" id="3.30.160.60:FF:001169">
    <property type="entry name" value="zinc finger protein 574"/>
    <property type="match status" value="1"/>
</dbReference>
<dbReference type="FunFam" id="3.30.160.60:FF:001184">
    <property type="entry name" value="zinc finger protein 574"/>
    <property type="match status" value="1"/>
</dbReference>
<dbReference type="FunFam" id="3.30.160.60:FF:001285">
    <property type="entry name" value="zinc finger protein 574"/>
    <property type="match status" value="1"/>
</dbReference>
<dbReference type="Gene3D" id="3.30.160.60">
    <property type="entry name" value="Classic Zinc Finger"/>
    <property type="match status" value="13"/>
</dbReference>
<dbReference type="InterPro" id="IPR036236">
    <property type="entry name" value="Znf_C2H2_sf"/>
</dbReference>
<dbReference type="InterPro" id="IPR013087">
    <property type="entry name" value="Znf_C2H2_type"/>
</dbReference>
<dbReference type="PANTHER" id="PTHR24399">
    <property type="entry name" value="ZINC FINGER AND BTB DOMAIN-CONTAINING"/>
    <property type="match status" value="1"/>
</dbReference>
<dbReference type="PANTHER" id="PTHR24399:SF73">
    <property type="entry name" value="ZINC FINGER PROTEIN 572"/>
    <property type="match status" value="1"/>
</dbReference>
<dbReference type="Pfam" id="PF00096">
    <property type="entry name" value="zf-C2H2"/>
    <property type="match status" value="6"/>
</dbReference>
<dbReference type="Pfam" id="PF13912">
    <property type="entry name" value="zf-C2H2_6"/>
    <property type="match status" value="2"/>
</dbReference>
<dbReference type="Pfam" id="PF12874">
    <property type="entry name" value="zf-met"/>
    <property type="match status" value="1"/>
</dbReference>
<dbReference type="SMART" id="SM00355">
    <property type="entry name" value="ZnF_C2H2"/>
    <property type="match status" value="20"/>
</dbReference>
<dbReference type="SUPFAM" id="SSF57667">
    <property type="entry name" value="beta-beta-alpha zinc fingers"/>
    <property type="match status" value="11"/>
</dbReference>
<dbReference type="PROSITE" id="PS00028">
    <property type="entry name" value="ZINC_FINGER_C2H2_1"/>
    <property type="match status" value="18"/>
</dbReference>
<dbReference type="PROSITE" id="PS50157">
    <property type="entry name" value="ZINC_FINGER_C2H2_2"/>
    <property type="match status" value="19"/>
</dbReference>